<feature type="chain" id="PRO_1000145739" description="Glutamyl-Q tRNA(Asp) synthetase">
    <location>
        <begin position="1"/>
        <end position="298"/>
    </location>
</feature>
<feature type="short sequence motif" description="'HIGH' region">
    <location>
        <begin position="11"/>
        <end position="21"/>
    </location>
</feature>
<feature type="short sequence motif" description="'KMSKS' region">
    <location>
        <begin position="239"/>
        <end position="243"/>
    </location>
</feature>
<feature type="binding site" evidence="1">
    <location>
        <begin position="8"/>
        <end position="12"/>
    </location>
    <ligand>
        <name>L-glutamate</name>
        <dbReference type="ChEBI" id="CHEBI:29985"/>
    </ligand>
</feature>
<feature type="binding site" evidence="1">
    <location>
        <position position="44"/>
    </location>
    <ligand>
        <name>L-glutamate</name>
        <dbReference type="ChEBI" id="CHEBI:29985"/>
    </ligand>
</feature>
<feature type="binding site" evidence="1">
    <location>
        <position position="100"/>
    </location>
    <ligand>
        <name>Zn(2+)</name>
        <dbReference type="ChEBI" id="CHEBI:29105"/>
    </ligand>
</feature>
<feature type="binding site" evidence="1">
    <location>
        <position position="102"/>
    </location>
    <ligand>
        <name>Zn(2+)</name>
        <dbReference type="ChEBI" id="CHEBI:29105"/>
    </ligand>
</feature>
<feature type="binding site" evidence="1">
    <location>
        <position position="123"/>
    </location>
    <ligand>
        <name>Zn(2+)</name>
        <dbReference type="ChEBI" id="CHEBI:29105"/>
    </ligand>
</feature>
<feature type="binding site" evidence="1">
    <location>
        <position position="127"/>
    </location>
    <ligand>
        <name>Zn(2+)</name>
        <dbReference type="ChEBI" id="CHEBI:29105"/>
    </ligand>
</feature>
<feature type="binding site" evidence="1">
    <location>
        <position position="183"/>
    </location>
    <ligand>
        <name>L-glutamate</name>
        <dbReference type="ChEBI" id="CHEBI:29985"/>
    </ligand>
</feature>
<feature type="binding site" evidence="1">
    <location>
        <position position="201"/>
    </location>
    <ligand>
        <name>L-glutamate</name>
        <dbReference type="ChEBI" id="CHEBI:29985"/>
    </ligand>
</feature>
<feature type="binding site" evidence="1">
    <location>
        <position position="242"/>
    </location>
    <ligand>
        <name>ATP</name>
        <dbReference type="ChEBI" id="CHEBI:30616"/>
    </ligand>
</feature>
<proteinExistence type="inferred from homology"/>
<organism>
    <name type="scientific">Burkholderia orbicola (strain MC0-3)</name>
    <dbReference type="NCBI Taxonomy" id="406425"/>
    <lineage>
        <taxon>Bacteria</taxon>
        <taxon>Pseudomonadati</taxon>
        <taxon>Pseudomonadota</taxon>
        <taxon>Betaproteobacteria</taxon>
        <taxon>Burkholderiales</taxon>
        <taxon>Burkholderiaceae</taxon>
        <taxon>Burkholderia</taxon>
        <taxon>Burkholderia cepacia complex</taxon>
        <taxon>Burkholderia orbicola</taxon>
    </lineage>
</organism>
<name>GLUQ_BURO0</name>
<comment type="function">
    <text evidence="1">Catalyzes the tRNA-independent activation of glutamate in presence of ATP and the subsequent transfer of glutamate onto a tRNA(Asp). Glutamate is transferred on the 2-amino-5-(4,5-dihydroxy-2-cyclopenten-1-yl) moiety of the queuosine in the wobble position of the QUC anticodon.</text>
</comment>
<comment type="cofactor">
    <cofactor evidence="1">
        <name>Zn(2+)</name>
        <dbReference type="ChEBI" id="CHEBI:29105"/>
    </cofactor>
    <text evidence="1">Binds 1 zinc ion per subunit.</text>
</comment>
<comment type="similarity">
    <text evidence="1">Belongs to the class-I aminoacyl-tRNA synthetase family. GluQ subfamily.</text>
</comment>
<sequence length="298" mass="31954">MNPGYRGRFAPSPTGPLHFGSLVGALASWLDARAHGGTWLVRIEDLDGPRTVPGAADDILAMLAHFGMTPDEPPVWQSTRDAAYTAALEQLVAAGLVYPCGCTRKEIADSLRAAHERHTTLAYPGTCRTGLHGKPARAWRLRVPDGCDAVVTFDDRWQHTQSQNLATEVGDFVLKRADGQWAYQLAVVFDDADAGITHVVRGADLLDSTARQIYLQRCLGVPTPEYLHVPVVVDANGEKLSKQTGATALERNDPLPALQAAAAHLGLANDGDLPGGTLDAFYTAATDAWARRFGPRAG</sequence>
<protein>
    <recommendedName>
        <fullName evidence="1">Glutamyl-Q tRNA(Asp) synthetase</fullName>
        <shortName evidence="1">Glu-Q-RSs</shortName>
        <ecNumber evidence="1">6.1.1.-</ecNumber>
    </recommendedName>
</protein>
<keyword id="KW-0030">Aminoacyl-tRNA synthetase</keyword>
<keyword id="KW-0067">ATP-binding</keyword>
<keyword id="KW-0436">Ligase</keyword>
<keyword id="KW-0479">Metal-binding</keyword>
<keyword id="KW-0547">Nucleotide-binding</keyword>
<keyword id="KW-0862">Zinc</keyword>
<evidence type="ECO:0000255" key="1">
    <source>
        <dbReference type="HAMAP-Rule" id="MF_01428"/>
    </source>
</evidence>
<reference key="1">
    <citation type="submission" date="2008-02" db="EMBL/GenBank/DDBJ databases">
        <title>Complete sequence of chromosome 1 of Burkholderia cenocepacia MC0-3.</title>
        <authorList>
            <person name="Copeland A."/>
            <person name="Lucas S."/>
            <person name="Lapidus A."/>
            <person name="Barry K."/>
            <person name="Bruce D."/>
            <person name="Goodwin L."/>
            <person name="Glavina del Rio T."/>
            <person name="Dalin E."/>
            <person name="Tice H."/>
            <person name="Pitluck S."/>
            <person name="Chain P."/>
            <person name="Malfatti S."/>
            <person name="Shin M."/>
            <person name="Vergez L."/>
            <person name="Schmutz J."/>
            <person name="Larimer F."/>
            <person name="Land M."/>
            <person name="Hauser L."/>
            <person name="Kyrpides N."/>
            <person name="Mikhailova N."/>
            <person name="Tiedje J."/>
            <person name="Richardson P."/>
        </authorList>
    </citation>
    <scope>NUCLEOTIDE SEQUENCE [LARGE SCALE GENOMIC DNA]</scope>
    <source>
        <strain>MC0-3</strain>
    </source>
</reference>
<accession>B1JW62</accession>
<gene>
    <name evidence="1" type="primary">gluQ</name>
    <name type="ordered locus">Bcenmc03_2338</name>
</gene>
<dbReference type="EC" id="6.1.1.-" evidence="1"/>
<dbReference type="EMBL" id="CP000958">
    <property type="protein sequence ID" value="ACA91499.1"/>
    <property type="molecule type" value="Genomic_DNA"/>
</dbReference>
<dbReference type="SMR" id="B1JW62"/>
<dbReference type="GeneID" id="83049127"/>
<dbReference type="KEGG" id="bcm:Bcenmc03_2338"/>
<dbReference type="HOGENOM" id="CLU_015768_0_1_4"/>
<dbReference type="Proteomes" id="UP000002169">
    <property type="component" value="Chromosome 1"/>
</dbReference>
<dbReference type="GO" id="GO:0005829">
    <property type="term" value="C:cytosol"/>
    <property type="evidence" value="ECO:0007669"/>
    <property type="project" value="TreeGrafter"/>
</dbReference>
<dbReference type="GO" id="GO:0005524">
    <property type="term" value="F:ATP binding"/>
    <property type="evidence" value="ECO:0007669"/>
    <property type="project" value="UniProtKB-KW"/>
</dbReference>
<dbReference type="GO" id="GO:0004818">
    <property type="term" value="F:glutamate-tRNA ligase activity"/>
    <property type="evidence" value="ECO:0007669"/>
    <property type="project" value="TreeGrafter"/>
</dbReference>
<dbReference type="GO" id="GO:0008270">
    <property type="term" value="F:zinc ion binding"/>
    <property type="evidence" value="ECO:0007669"/>
    <property type="project" value="UniProtKB-UniRule"/>
</dbReference>
<dbReference type="GO" id="GO:0006424">
    <property type="term" value="P:glutamyl-tRNA aminoacylation"/>
    <property type="evidence" value="ECO:0007669"/>
    <property type="project" value="InterPro"/>
</dbReference>
<dbReference type="GO" id="GO:0006400">
    <property type="term" value="P:tRNA modification"/>
    <property type="evidence" value="ECO:0007669"/>
    <property type="project" value="InterPro"/>
</dbReference>
<dbReference type="Gene3D" id="3.40.50.620">
    <property type="entry name" value="HUPs"/>
    <property type="match status" value="1"/>
</dbReference>
<dbReference type="HAMAP" id="MF_01428">
    <property type="entry name" value="Glu_Q_tRNA_synth"/>
    <property type="match status" value="1"/>
</dbReference>
<dbReference type="InterPro" id="IPR022380">
    <property type="entry name" value="Glu-Q_tRNA(Asp)_Synthase"/>
</dbReference>
<dbReference type="InterPro" id="IPR000924">
    <property type="entry name" value="Glu/Gln-tRNA-synth"/>
</dbReference>
<dbReference type="InterPro" id="IPR020058">
    <property type="entry name" value="Glu/Gln-tRNA-synth_Ib_cat-dom"/>
</dbReference>
<dbReference type="InterPro" id="IPR049940">
    <property type="entry name" value="GluQ/Sye"/>
</dbReference>
<dbReference type="InterPro" id="IPR014729">
    <property type="entry name" value="Rossmann-like_a/b/a_fold"/>
</dbReference>
<dbReference type="NCBIfam" id="NF004313">
    <property type="entry name" value="PRK05710.1-2"/>
    <property type="match status" value="1"/>
</dbReference>
<dbReference type="NCBIfam" id="NF004314">
    <property type="entry name" value="PRK05710.1-3"/>
    <property type="match status" value="1"/>
</dbReference>
<dbReference type="NCBIfam" id="NF004315">
    <property type="entry name" value="PRK05710.1-4"/>
    <property type="match status" value="1"/>
</dbReference>
<dbReference type="NCBIfam" id="TIGR03838">
    <property type="entry name" value="queuosine_YadB"/>
    <property type="match status" value="1"/>
</dbReference>
<dbReference type="PANTHER" id="PTHR43311">
    <property type="entry name" value="GLUTAMATE--TRNA LIGASE"/>
    <property type="match status" value="1"/>
</dbReference>
<dbReference type="PANTHER" id="PTHR43311:SF1">
    <property type="entry name" value="GLUTAMYL-Q TRNA(ASP) SYNTHETASE"/>
    <property type="match status" value="1"/>
</dbReference>
<dbReference type="Pfam" id="PF00749">
    <property type="entry name" value="tRNA-synt_1c"/>
    <property type="match status" value="1"/>
</dbReference>
<dbReference type="PRINTS" id="PR00987">
    <property type="entry name" value="TRNASYNTHGLU"/>
</dbReference>
<dbReference type="SUPFAM" id="SSF52374">
    <property type="entry name" value="Nucleotidylyl transferase"/>
    <property type="match status" value="1"/>
</dbReference>